<organism>
    <name type="scientific">Geotalea daltonii (strain DSM 22248 / JCM 15807 / FRC-32)</name>
    <name type="common">Geobacter daltonii</name>
    <dbReference type="NCBI Taxonomy" id="316067"/>
    <lineage>
        <taxon>Bacteria</taxon>
        <taxon>Pseudomonadati</taxon>
        <taxon>Thermodesulfobacteriota</taxon>
        <taxon>Desulfuromonadia</taxon>
        <taxon>Geobacterales</taxon>
        <taxon>Geobacteraceae</taxon>
        <taxon>Geotalea</taxon>
    </lineage>
</organism>
<accession>B9M0Y0</accession>
<reference key="1">
    <citation type="submission" date="2009-01" db="EMBL/GenBank/DDBJ databases">
        <title>Complete sequence of Geobacter sp. FRC-32.</title>
        <authorList>
            <consortium name="US DOE Joint Genome Institute"/>
            <person name="Lucas S."/>
            <person name="Copeland A."/>
            <person name="Lapidus A."/>
            <person name="Glavina del Rio T."/>
            <person name="Dalin E."/>
            <person name="Tice H."/>
            <person name="Bruce D."/>
            <person name="Goodwin L."/>
            <person name="Pitluck S."/>
            <person name="Saunders E."/>
            <person name="Brettin T."/>
            <person name="Detter J.C."/>
            <person name="Han C."/>
            <person name="Larimer F."/>
            <person name="Land M."/>
            <person name="Hauser L."/>
            <person name="Kyrpides N."/>
            <person name="Ovchinnikova G."/>
            <person name="Kostka J."/>
            <person name="Richardson P."/>
        </authorList>
    </citation>
    <scope>NUCLEOTIDE SEQUENCE [LARGE SCALE GENOMIC DNA]</scope>
    <source>
        <strain>DSM 22248 / JCM 15807 / FRC-32</strain>
    </source>
</reference>
<protein>
    <recommendedName>
        <fullName evidence="1">Trigger factor</fullName>
        <shortName evidence="1">TF</shortName>
        <ecNumber evidence="1">5.2.1.8</ecNumber>
    </recommendedName>
    <alternativeName>
        <fullName evidence="1">PPIase</fullName>
    </alternativeName>
</protein>
<feature type="chain" id="PRO_1000198159" description="Trigger factor">
    <location>
        <begin position="1"/>
        <end position="435"/>
    </location>
</feature>
<feature type="domain" description="PPIase FKBP-type" evidence="1">
    <location>
        <begin position="163"/>
        <end position="248"/>
    </location>
</feature>
<comment type="function">
    <text evidence="1">Involved in protein export. Acts as a chaperone by maintaining the newly synthesized protein in an open conformation. Functions as a peptidyl-prolyl cis-trans isomerase.</text>
</comment>
<comment type="catalytic activity">
    <reaction evidence="1">
        <text>[protein]-peptidylproline (omega=180) = [protein]-peptidylproline (omega=0)</text>
        <dbReference type="Rhea" id="RHEA:16237"/>
        <dbReference type="Rhea" id="RHEA-COMP:10747"/>
        <dbReference type="Rhea" id="RHEA-COMP:10748"/>
        <dbReference type="ChEBI" id="CHEBI:83833"/>
        <dbReference type="ChEBI" id="CHEBI:83834"/>
        <dbReference type="EC" id="5.2.1.8"/>
    </reaction>
</comment>
<comment type="subcellular location">
    <subcellularLocation>
        <location>Cytoplasm</location>
    </subcellularLocation>
    <text evidence="1">About half TF is bound to the ribosome near the polypeptide exit tunnel while the other half is free in the cytoplasm.</text>
</comment>
<comment type="domain">
    <text evidence="1">Consists of 3 domains; the N-terminus binds the ribosome, the middle domain has PPIase activity, while the C-terminus has intrinsic chaperone activity on its own.</text>
</comment>
<comment type="similarity">
    <text evidence="1">Belongs to the FKBP-type PPIase family. Tig subfamily.</text>
</comment>
<gene>
    <name evidence="1" type="primary">tig</name>
    <name type="ordered locus">Geob_2633</name>
</gene>
<keyword id="KW-0131">Cell cycle</keyword>
<keyword id="KW-0132">Cell division</keyword>
<keyword id="KW-0143">Chaperone</keyword>
<keyword id="KW-0963">Cytoplasm</keyword>
<keyword id="KW-0413">Isomerase</keyword>
<keyword id="KW-1185">Reference proteome</keyword>
<keyword id="KW-0697">Rotamase</keyword>
<dbReference type="EC" id="5.2.1.8" evidence="1"/>
<dbReference type="EMBL" id="CP001390">
    <property type="protein sequence ID" value="ACM20983.1"/>
    <property type="molecule type" value="Genomic_DNA"/>
</dbReference>
<dbReference type="RefSeq" id="WP_012647712.1">
    <property type="nucleotide sequence ID" value="NC_011979.1"/>
</dbReference>
<dbReference type="SMR" id="B9M0Y0"/>
<dbReference type="STRING" id="316067.Geob_2633"/>
<dbReference type="KEGG" id="geo:Geob_2633"/>
<dbReference type="eggNOG" id="COG0544">
    <property type="taxonomic scope" value="Bacteria"/>
</dbReference>
<dbReference type="HOGENOM" id="CLU_033058_3_2_7"/>
<dbReference type="OrthoDB" id="9767721at2"/>
<dbReference type="Proteomes" id="UP000007721">
    <property type="component" value="Chromosome"/>
</dbReference>
<dbReference type="GO" id="GO:0005737">
    <property type="term" value="C:cytoplasm"/>
    <property type="evidence" value="ECO:0007669"/>
    <property type="project" value="UniProtKB-SubCell"/>
</dbReference>
<dbReference type="GO" id="GO:0003755">
    <property type="term" value="F:peptidyl-prolyl cis-trans isomerase activity"/>
    <property type="evidence" value="ECO:0007669"/>
    <property type="project" value="UniProtKB-UniRule"/>
</dbReference>
<dbReference type="GO" id="GO:0044183">
    <property type="term" value="F:protein folding chaperone"/>
    <property type="evidence" value="ECO:0007669"/>
    <property type="project" value="TreeGrafter"/>
</dbReference>
<dbReference type="GO" id="GO:0043022">
    <property type="term" value="F:ribosome binding"/>
    <property type="evidence" value="ECO:0007669"/>
    <property type="project" value="TreeGrafter"/>
</dbReference>
<dbReference type="GO" id="GO:0051083">
    <property type="term" value="P:'de novo' cotranslational protein folding"/>
    <property type="evidence" value="ECO:0007669"/>
    <property type="project" value="TreeGrafter"/>
</dbReference>
<dbReference type="GO" id="GO:0051301">
    <property type="term" value="P:cell division"/>
    <property type="evidence" value="ECO:0007669"/>
    <property type="project" value="UniProtKB-KW"/>
</dbReference>
<dbReference type="GO" id="GO:0061077">
    <property type="term" value="P:chaperone-mediated protein folding"/>
    <property type="evidence" value="ECO:0007669"/>
    <property type="project" value="TreeGrafter"/>
</dbReference>
<dbReference type="GO" id="GO:0015031">
    <property type="term" value="P:protein transport"/>
    <property type="evidence" value="ECO:0007669"/>
    <property type="project" value="UniProtKB-UniRule"/>
</dbReference>
<dbReference type="GO" id="GO:0043335">
    <property type="term" value="P:protein unfolding"/>
    <property type="evidence" value="ECO:0007669"/>
    <property type="project" value="TreeGrafter"/>
</dbReference>
<dbReference type="FunFam" id="3.10.50.40:FF:000001">
    <property type="entry name" value="Trigger factor"/>
    <property type="match status" value="1"/>
</dbReference>
<dbReference type="Gene3D" id="3.10.50.40">
    <property type="match status" value="1"/>
</dbReference>
<dbReference type="Gene3D" id="3.30.70.1050">
    <property type="entry name" value="Trigger factor ribosome-binding domain"/>
    <property type="match status" value="1"/>
</dbReference>
<dbReference type="Gene3D" id="1.10.3120.10">
    <property type="entry name" value="Trigger factor, C-terminal domain"/>
    <property type="match status" value="1"/>
</dbReference>
<dbReference type="HAMAP" id="MF_00303">
    <property type="entry name" value="Trigger_factor_Tig"/>
    <property type="match status" value="1"/>
</dbReference>
<dbReference type="InterPro" id="IPR046357">
    <property type="entry name" value="PPIase_dom_sf"/>
</dbReference>
<dbReference type="InterPro" id="IPR001179">
    <property type="entry name" value="PPIase_FKBP_dom"/>
</dbReference>
<dbReference type="InterPro" id="IPR005215">
    <property type="entry name" value="Trig_fac"/>
</dbReference>
<dbReference type="InterPro" id="IPR008880">
    <property type="entry name" value="Trigger_fac_C"/>
</dbReference>
<dbReference type="InterPro" id="IPR037041">
    <property type="entry name" value="Trigger_fac_C_sf"/>
</dbReference>
<dbReference type="InterPro" id="IPR008881">
    <property type="entry name" value="Trigger_fac_ribosome-bd_bac"/>
</dbReference>
<dbReference type="InterPro" id="IPR036611">
    <property type="entry name" value="Trigger_fac_ribosome-bd_sf"/>
</dbReference>
<dbReference type="InterPro" id="IPR027304">
    <property type="entry name" value="Trigger_fact/SurA_dom_sf"/>
</dbReference>
<dbReference type="NCBIfam" id="TIGR00115">
    <property type="entry name" value="tig"/>
    <property type="match status" value="1"/>
</dbReference>
<dbReference type="PANTHER" id="PTHR30560">
    <property type="entry name" value="TRIGGER FACTOR CHAPERONE AND PEPTIDYL-PROLYL CIS/TRANS ISOMERASE"/>
    <property type="match status" value="1"/>
</dbReference>
<dbReference type="PANTHER" id="PTHR30560:SF3">
    <property type="entry name" value="TRIGGER FACTOR-LIKE PROTEIN TIG, CHLOROPLASTIC"/>
    <property type="match status" value="1"/>
</dbReference>
<dbReference type="Pfam" id="PF00254">
    <property type="entry name" value="FKBP_C"/>
    <property type="match status" value="1"/>
</dbReference>
<dbReference type="Pfam" id="PF05698">
    <property type="entry name" value="Trigger_C"/>
    <property type="match status" value="1"/>
</dbReference>
<dbReference type="Pfam" id="PF05697">
    <property type="entry name" value="Trigger_N"/>
    <property type="match status" value="1"/>
</dbReference>
<dbReference type="PIRSF" id="PIRSF003095">
    <property type="entry name" value="Trigger_factor"/>
    <property type="match status" value="1"/>
</dbReference>
<dbReference type="SUPFAM" id="SSF54534">
    <property type="entry name" value="FKBP-like"/>
    <property type="match status" value="1"/>
</dbReference>
<dbReference type="SUPFAM" id="SSF109998">
    <property type="entry name" value="Triger factor/SurA peptide-binding domain-like"/>
    <property type="match status" value="1"/>
</dbReference>
<dbReference type="SUPFAM" id="SSF102735">
    <property type="entry name" value="Trigger factor ribosome-binding domain"/>
    <property type="match status" value="1"/>
</dbReference>
<dbReference type="PROSITE" id="PS50059">
    <property type="entry name" value="FKBP_PPIASE"/>
    <property type="match status" value="1"/>
</dbReference>
<sequence length="435" mass="49260">MQISVESLSSVKKKINFEIPAARVASEVEKVYDEIRKHAAIKGFRKGKVPKDIIKKHYHEKMADDVLKNIVNDTYFKALTDEKIYPVSYPVIDSDELKVGENFKYSATVEVFPDVEVKDYDGLEVKKEKFVLNDEVVTGRLREMQENMAHLEPAEAGVAAKSGDYVTFDFKGSIDGVPFDGGAADDFQLELGSGRFIPGFEDQLVGMKSGDESEIKVTFPENYGQKDLAGKDASFTVKIKEIKVKELPELNDDFAKDFGEFETLEDLKKKIAEVHNLQENERIEADLRDRLIKALIEKNSFEVPETLVDKQLNLMLENSKRRLAMQRLTIEMMGLNDEGYKAQFRSAAETQVKGSILLDALARKESIEVTAAEVDEKLEQIAQQNNQDLEQVNKFYQQNAQAKENLSAQLKEDKAIELLLSKATVTEVERKELDK</sequence>
<proteinExistence type="inferred from homology"/>
<name>TIG_GEODF</name>
<evidence type="ECO:0000255" key="1">
    <source>
        <dbReference type="HAMAP-Rule" id="MF_00303"/>
    </source>
</evidence>